<accession>O45685</accession>
<comment type="function">
    <text evidence="1">May participate in the coupling of lysosomes to microtubule plus-end-directed kinesin motor.</text>
</comment>
<comment type="subcellular location">
    <subcellularLocation>
        <location evidence="1">Lysosome membrane</location>
    </subcellularLocation>
</comment>
<comment type="similarity">
    <text evidence="3">Belongs to the BORCS8 family.</text>
</comment>
<sequence length="151" mass="16858">MPDPSSTPNRTREIESRSRIISERICESVRLLDNEPSLALYRLQEHTVRSLPGLVNRRIMLTQQSATLSGAQFDLENTLSTTTSMQNATSAFDNCIELLRNCMFYKQQLDFDSTRKATSSAESSTVKGRSKSLHNVATRVHSTEASTSNDA</sequence>
<proteinExistence type="inferred from homology"/>
<gene>
    <name evidence="4" type="primary">blos-9</name>
    <name evidence="4" type="ORF">K11B4.2</name>
</gene>
<organism>
    <name type="scientific">Caenorhabditis elegans</name>
    <dbReference type="NCBI Taxonomy" id="6239"/>
    <lineage>
        <taxon>Eukaryota</taxon>
        <taxon>Metazoa</taxon>
        <taxon>Ecdysozoa</taxon>
        <taxon>Nematoda</taxon>
        <taxon>Chromadorea</taxon>
        <taxon>Rhabditida</taxon>
        <taxon>Rhabditina</taxon>
        <taxon>Rhabditomorpha</taxon>
        <taxon>Rhabditoidea</taxon>
        <taxon>Rhabditidae</taxon>
        <taxon>Peloderinae</taxon>
        <taxon>Caenorhabditis</taxon>
    </lineage>
</organism>
<feature type="chain" id="PRO_0000269846" description="BLOC-1-related complex subunit 8 homolog">
    <location>
        <begin position="1"/>
        <end position="151"/>
    </location>
</feature>
<feature type="region of interest" description="Disordered" evidence="2">
    <location>
        <begin position="116"/>
        <end position="151"/>
    </location>
</feature>
<feature type="compositionally biased region" description="Polar residues" evidence="2">
    <location>
        <begin position="116"/>
        <end position="127"/>
    </location>
</feature>
<reference key="1">
    <citation type="journal article" date="1998" name="Science">
        <title>Genome sequence of the nematode C. elegans: a platform for investigating biology.</title>
        <authorList>
            <consortium name="The C. elegans sequencing consortium"/>
        </authorList>
    </citation>
    <scope>NUCLEOTIDE SEQUENCE [LARGE SCALE GENOMIC DNA]</scope>
    <source>
        <strain>Bristol N2</strain>
    </source>
</reference>
<name>BORC8_CAEEL</name>
<evidence type="ECO:0000250" key="1">
    <source>
        <dbReference type="UniProtKB" id="Q96FH0"/>
    </source>
</evidence>
<evidence type="ECO:0000256" key="2">
    <source>
        <dbReference type="SAM" id="MobiDB-lite"/>
    </source>
</evidence>
<evidence type="ECO:0000305" key="3"/>
<evidence type="ECO:0000312" key="4">
    <source>
        <dbReference type="WormBase" id="K11B4.2"/>
    </source>
</evidence>
<dbReference type="EMBL" id="Z81569">
    <property type="protein sequence ID" value="CAB04601.2"/>
    <property type="molecule type" value="Genomic_DNA"/>
</dbReference>
<dbReference type="PIR" id="H88003">
    <property type="entry name" value="H88003"/>
</dbReference>
<dbReference type="PIR" id="T23599">
    <property type="entry name" value="T23599"/>
</dbReference>
<dbReference type="RefSeq" id="NP_493581.1">
    <property type="nucleotide sequence ID" value="NM_061180.5"/>
</dbReference>
<dbReference type="EMDB" id="EMD-62312"/>
<dbReference type="FunCoup" id="O45685">
    <property type="interactions" value="1487"/>
</dbReference>
<dbReference type="STRING" id="6239.K11B4.2.1"/>
<dbReference type="PaxDb" id="6239-K11B4.2"/>
<dbReference type="PeptideAtlas" id="O45685"/>
<dbReference type="EnsemblMetazoa" id="K11B4.2.1">
    <property type="protein sequence ID" value="K11B4.2.1"/>
    <property type="gene ID" value="WBGene00010767"/>
</dbReference>
<dbReference type="GeneID" id="173350"/>
<dbReference type="KEGG" id="cel:CELE_K11B4.2"/>
<dbReference type="UCSC" id="K11B4.2">
    <property type="organism name" value="c. elegans"/>
</dbReference>
<dbReference type="AGR" id="WB:WBGene00010767"/>
<dbReference type="CTD" id="173350"/>
<dbReference type="WormBase" id="K11B4.2">
    <property type="protein sequence ID" value="CE23868"/>
    <property type="gene ID" value="WBGene00010767"/>
    <property type="gene designation" value="blos-9"/>
</dbReference>
<dbReference type="eggNOG" id="KOG4523">
    <property type="taxonomic scope" value="Eukaryota"/>
</dbReference>
<dbReference type="GeneTree" id="ENSGT00390000014856"/>
<dbReference type="HOGENOM" id="CLU_151479_0_0_1"/>
<dbReference type="InParanoid" id="O45685"/>
<dbReference type="OMA" id="SMMNHAR"/>
<dbReference type="OrthoDB" id="10044187at2759"/>
<dbReference type="PhylomeDB" id="O45685"/>
<dbReference type="PRO" id="PR:O45685"/>
<dbReference type="Proteomes" id="UP000001940">
    <property type="component" value="Chromosome I"/>
</dbReference>
<dbReference type="Bgee" id="WBGene00010767">
    <property type="expression patterns" value="Expressed in embryo and 4 other cell types or tissues"/>
</dbReference>
<dbReference type="GO" id="GO:0099078">
    <property type="term" value="C:BORC complex"/>
    <property type="evidence" value="ECO:0000318"/>
    <property type="project" value="GO_Central"/>
</dbReference>
<dbReference type="GO" id="GO:0005765">
    <property type="term" value="C:lysosomal membrane"/>
    <property type="evidence" value="ECO:0007669"/>
    <property type="project" value="UniProtKB-SubCell"/>
</dbReference>
<dbReference type="InterPro" id="IPR019320">
    <property type="entry name" value="BORCS8"/>
</dbReference>
<dbReference type="PANTHER" id="PTHR21146:SF0">
    <property type="entry name" value="BLOC-1-RELATED COMPLEX SUBUNIT 8"/>
    <property type="match status" value="1"/>
</dbReference>
<dbReference type="PANTHER" id="PTHR21146">
    <property type="entry name" value="MEF2B PROTEIN"/>
    <property type="match status" value="1"/>
</dbReference>
<dbReference type="Pfam" id="PF10167">
    <property type="entry name" value="BORCS8"/>
    <property type="match status" value="1"/>
</dbReference>
<keyword id="KW-0458">Lysosome</keyword>
<keyword id="KW-0472">Membrane</keyword>
<keyword id="KW-1185">Reference proteome</keyword>
<protein>
    <recommendedName>
        <fullName evidence="3">BLOC-1-related complex subunit 8 homolog</fullName>
    </recommendedName>
</protein>